<proteinExistence type="inferred from homology"/>
<dbReference type="EC" id="2.7.8.13" evidence="1"/>
<dbReference type="EMBL" id="CP000458">
    <property type="protein sequence ID" value="ABK07310.1"/>
    <property type="molecule type" value="Genomic_DNA"/>
</dbReference>
<dbReference type="RefSeq" id="WP_006477019.1">
    <property type="nucleotide sequence ID" value="NC_008542.1"/>
</dbReference>
<dbReference type="SMR" id="A0K483"/>
<dbReference type="GeneID" id="93193209"/>
<dbReference type="KEGG" id="bch:Bcen2424_0556"/>
<dbReference type="HOGENOM" id="CLU_023982_0_0_4"/>
<dbReference type="UniPathway" id="UPA00219"/>
<dbReference type="GO" id="GO:0005886">
    <property type="term" value="C:plasma membrane"/>
    <property type="evidence" value="ECO:0007669"/>
    <property type="project" value="UniProtKB-SubCell"/>
</dbReference>
<dbReference type="GO" id="GO:0046872">
    <property type="term" value="F:metal ion binding"/>
    <property type="evidence" value="ECO:0007669"/>
    <property type="project" value="UniProtKB-KW"/>
</dbReference>
<dbReference type="GO" id="GO:0008963">
    <property type="term" value="F:phospho-N-acetylmuramoyl-pentapeptide-transferase activity"/>
    <property type="evidence" value="ECO:0007669"/>
    <property type="project" value="UniProtKB-UniRule"/>
</dbReference>
<dbReference type="GO" id="GO:0051992">
    <property type="term" value="F:UDP-N-acetylmuramoyl-L-alanyl-D-glutamyl-meso-2,6-diaminopimelyl-D-alanyl-D-alanine:undecaprenyl-phosphate transferase activity"/>
    <property type="evidence" value="ECO:0007669"/>
    <property type="project" value="RHEA"/>
</dbReference>
<dbReference type="GO" id="GO:0051301">
    <property type="term" value="P:cell division"/>
    <property type="evidence" value="ECO:0007669"/>
    <property type="project" value="UniProtKB-KW"/>
</dbReference>
<dbReference type="GO" id="GO:0071555">
    <property type="term" value="P:cell wall organization"/>
    <property type="evidence" value="ECO:0007669"/>
    <property type="project" value="UniProtKB-KW"/>
</dbReference>
<dbReference type="GO" id="GO:0009252">
    <property type="term" value="P:peptidoglycan biosynthetic process"/>
    <property type="evidence" value="ECO:0007669"/>
    <property type="project" value="UniProtKB-UniRule"/>
</dbReference>
<dbReference type="GO" id="GO:0008360">
    <property type="term" value="P:regulation of cell shape"/>
    <property type="evidence" value="ECO:0007669"/>
    <property type="project" value="UniProtKB-KW"/>
</dbReference>
<dbReference type="CDD" id="cd06852">
    <property type="entry name" value="GT_MraY"/>
    <property type="match status" value="1"/>
</dbReference>
<dbReference type="HAMAP" id="MF_00038">
    <property type="entry name" value="MraY"/>
    <property type="match status" value="1"/>
</dbReference>
<dbReference type="InterPro" id="IPR000715">
    <property type="entry name" value="Glycosyl_transferase_4"/>
</dbReference>
<dbReference type="InterPro" id="IPR003524">
    <property type="entry name" value="PNAcMuramoyl-5peptid_Trfase"/>
</dbReference>
<dbReference type="InterPro" id="IPR018480">
    <property type="entry name" value="PNAcMuramoyl-5peptid_Trfase_CS"/>
</dbReference>
<dbReference type="NCBIfam" id="TIGR00445">
    <property type="entry name" value="mraY"/>
    <property type="match status" value="1"/>
</dbReference>
<dbReference type="PANTHER" id="PTHR22926">
    <property type="entry name" value="PHOSPHO-N-ACETYLMURAMOYL-PENTAPEPTIDE-TRANSFERASE"/>
    <property type="match status" value="1"/>
</dbReference>
<dbReference type="PANTHER" id="PTHR22926:SF5">
    <property type="entry name" value="PHOSPHO-N-ACETYLMURAMOYL-PENTAPEPTIDE-TRANSFERASE HOMOLOG"/>
    <property type="match status" value="1"/>
</dbReference>
<dbReference type="Pfam" id="PF00953">
    <property type="entry name" value="Glycos_transf_4"/>
    <property type="match status" value="1"/>
</dbReference>
<dbReference type="Pfam" id="PF10555">
    <property type="entry name" value="MraY_sig1"/>
    <property type="match status" value="1"/>
</dbReference>
<dbReference type="PROSITE" id="PS01347">
    <property type="entry name" value="MRAY_1"/>
    <property type="match status" value="1"/>
</dbReference>
<dbReference type="PROSITE" id="PS01348">
    <property type="entry name" value="MRAY_2"/>
    <property type="match status" value="1"/>
</dbReference>
<evidence type="ECO:0000255" key="1">
    <source>
        <dbReference type="HAMAP-Rule" id="MF_00038"/>
    </source>
</evidence>
<keyword id="KW-0131">Cell cycle</keyword>
<keyword id="KW-0132">Cell division</keyword>
<keyword id="KW-0997">Cell inner membrane</keyword>
<keyword id="KW-1003">Cell membrane</keyword>
<keyword id="KW-0133">Cell shape</keyword>
<keyword id="KW-0961">Cell wall biogenesis/degradation</keyword>
<keyword id="KW-0460">Magnesium</keyword>
<keyword id="KW-0472">Membrane</keyword>
<keyword id="KW-0479">Metal-binding</keyword>
<keyword id="KW-0573">Peptidoglycan synthesis</keyword>
<keyword id="KW-0808">Transferase</keyword>
<keyword id="KW-0812">Transmembrane</keyword>
<keyword id="KW-1133">Transmembrane helix</keyword>
<reference key="1">
    <citation type="submission" date="2006-08" db="EMBL/GenBank/DDBJ databases">
        <title>Complete sequence of chromosome 1 of Burkholderia cenocepacia HI2424.</title>
        <authorList>
            <person name="Copeland A."/>
            <person name="Lucas S."/>
            <person name="Lapidus A."/>
            <person name="Barry K."/>
            <person name="Detter J.C."/>
            <person name="Glavina del Rio T."/>
            <person name="Hammon N."/>
            <person name="Israni S."/>
            <person name="Pitluck S."/>
            <person name="Chain P."/>
            <person name="Malfatti S."/>
            <person name="Shin M."/>
            <person name="Vergez L."/>
            <person name="Schmutz J."/>
            <person name="Larimer F."/>
            <person name="Land M."/>
            <person name="Hauser L."/>
            <person name="Kyrpides N."/>
            <person name="Kim E."/>
            <person name="LiPuma J.J."/>
            <person name="Gonzalez C.F."/>
            <person name="Konstantinidis K."/>
            <person name="Tiedje J.M."/>
            <person name="Richardson P."/>
        </authorList>
    </citation>
    <scope>NUCLEOTIDE SEQUENCE [LARGE SCALE GENOMIC DNA]</scope>
    <source>
        <strain>HI2424</strain>
    </source>
</reference>
<name>MRAY_BURCH</name>
<gene>
    <name evidence="1" type="primary">mraY</name>
    <name type="ordered locus">Bcen2424_0556</name>
</gene>
<sequence length="389" mass="42808">MLLALAQWLQGDASFLRLFTYLTFRAVMATITALGIGLVCGPWVIRKLTQMKVGQAVRKDGPQTHLVKSGTPTMGGVLILIGIAVATLLWGDLTNRFIWIVMLVTFGFGVIGWVDDYRKVVHKDPRGMSSREKYFWQSVIGLFAAVYLAFSVSEANNVRVFDLFMAWVRSGLSMGLPARADLMLPFLKSISYPLGVWGFIVLTYFVIVGASNAVNLTDGLDGLVIMPVVLVGASLGVFAYVMGSAVYSKYLLFPHIPGAGELLIFCSAMGGAGLAFLWYNTHPAQVFMGDVGALALGGALGTVAVIVRQEIVLFIMGGIFVAETLSVMLQVSWFKYTKKRYGEGRRLLKMAPLHHHFELSGWKETQVVVRFWIITLMLCLFGLTTLKLR</sequence>
<accession>A0K483</accession>
<feature type="chain" id="PRO_1000002945" description="Phospho-N-acetylmuramoyl-pentapeptide-transferase">
    <location>
        <begin position="1"/>
        <end position="389"/>
    </location>
</feature>
<feature type="transmembrane region" description="Helical" evidence="1">
    <location>
        <begin position="25"/>
        <end position="45"/>
    </location>
</feature>
<feature type="transmembrane region" description="Helical" evidence="1">
    <location>
        <begin position="73"/>
        <end position="93"/>
    </location>
</feature>
<feature type="transmembrane region" description="Helical" evidence="1">
    <location>
        <begin position="97"/>
        <end position="117"/>
    </location>
</feature>
<feature type="transmembrane region" description="Helical" evidence="1">
    <location>
        <begin position="135"/>
        <end position="155"/>
    </location>
</feature>
<feature type="transmembrane region" description="Helical" evidence="1">
    <location>
        <begin position="190"/>
        <end position="210"/>
    </location>
</feature>
<feature type="transmembrane region" description="Helical" evidence="1">
    <location>
        <begin position="222"/>
        <end position="242"/>
    </location>
</feature>
<feature type="transmembrane region" description="Helical" evidence="1">
    <location>
        <begin position="258"/>
        <end position="278"/>
    </location>
</feature>
<feature type="transmembrane region" description="Helical" evidence="1">
    <location>
        <begin position="286"/>
        <end position="306"/>
    </location>
</feature>
<feature type="transmembrane region" description="Helical" evidence="1">
    <location>
        <begin position="311"/>
        <end position="331"/>
    </location>
</feature>
<feature type="transmembrane region" description="Helical" evidence="1">
    <location>
        <begin position="366"/>
        <end position="386"/>
    </location>
</feature>
<protein>
    <recommendedName>
        <fullName evidence="1">Phospho-N-acetylmuramoyl-pentapeptide-transferase</fullName>
        <ecNumber evidence="1">2.7.8.13</ecNumber>
    </recommendedName>
    <alternativeName>
        <fullName evidence="1">UDP-MurNAc-pentapeptide phosphotransferase</fullName>
    </alternativeName>
</protein>
<organism>
    <name type="scientific">Burkholderia cenocepacia (strain HI2424)</name>
    <dbReference type="NCBI Taxonomy" id="331272"/>
    <lineage>
        <taxon>Bacteria</taxon>
        <taxon>Pseudomonadati</taxon>
        <taxon>Pseudomonadota</taxon>
        <taxon>Betaproteobacteria</taxon>
        <taxon>Burkholderiales</taxon>
        <taxon>Burkholderiaceae</taxon>
        <taxon>Burkholderia</taxon>
        <taxon>Burkholderia cepacia complex</taxon>
    </lineage>
</organism>
<comment type="function">
    <text evidence="1">Catalyzes the initial step of the lipid cycle reactions in the biosynthesis of the cell wall peptidoglycan: transfers peptidoglycan precursor phospho-MurNAc-pentapeptide from UDP-MurNAc-pentapeptide onto the lipid carrier undecaprenyl phosphate, yielding undecaprenyl-pyrophosphoryl-MurNAc-pentapeptide, known as lipid I.</text>
</comment>
<comment type="catalytic activity">
    <reaction evidence="1">
        <text>UDP-N-acetyl-alpha-D-muramoyl-L-alanyl-gamma-D-glutamyl-meso-2,6-diaminopimeloyl-D-alanyl-D-alanine + di-trans,octa-cis-undecaprenyl phosphate = di-trans,octa-cis-undecaprenyl diphospho-N-acetyl-alpha-D-muramoyl-L-alanyl-D-glutamyl-meso-2,6-diaminopimeloyl-D-alanyl-D-alanine + UMP</text>
        <dbReference type="Rhea" id="RHEA:28386"/>
        <dbReference type="ChEBI" id="CHEBI:57865"/>
        <dbReference type="ChEBI" id="CHEBI:60392"/>
        <dbReference type="ChEBI" id="CHEBI:61386"/>
        <dbReference type="ChEBI" id="CHEBI:61387"/>
        <dbReference type="EC" id="2.7.8.13"/>
    </reaction>
</comment>
<comment type="cofactor">
    <cofactor evidence="1">
        <name>Mg(2+)</name>
        <dbReference type="ChEBI" id="CHEBI:18420"/>
    </cofactor>
</comment>
<comment type="pathway">
    <text evidence="1">Cell wall biogenesis; peptidoglycan biosynthesis.</text>
</comment>
<comment type="subcellular location">
    <subcellularLocation>
        <location evidence="1">Cell inner membrane</location>
        <topology evidence="1">Multi-pass membrane protein</topology>
    </subcellularLocation>
</comment>
<comment type="similarity">
    <text evidence="1">Belongs to the glycosyltransferase 4 family. MraY subfamily.</text>
</comment>